<accession>Q17VT5</accession>
<dbReference type="EMBL" id="AM260522">
    <property type="protein sequence ID" value="CAK00241.1"/>
    <property type="molecule type" value="Genomic_DNA"/>
</dbReference>
<dbReference type="RefSeq" id="WP_011578328.1">
    <property type="nucleotide sequence ID" value="NC_008229.1"/>
</dbReference>
<dbReference type="SMR" id="Q17VT5"/>
<dbReference type="STRING" id="382638.Hac_1521"/>
<dbReference type="GeneID" id="31758791"/>
<dbReference type="KEGG" id="hac:Hac_1521"/>
<dbReference type="eggNOG" id="COG0102">
    <property type="taxonomic scope" value="Bacteria"/>
</dbReference>
<dbReference type="HOGENOM" id="CLU_082184_2_2_7"/>
<dbReference type="OrthoDB" id="9801330at2"/>
<dbReference type="BioCyc" id="HACI382638:HAC_RS06450-MONOMER"/>
<dbReference type="Proteomes" id="UP000000775">
    <property type="component" value="Chromosome"/>
</dbReference>
<dbReference type="GO" id="GO:0022625">
    <property type="term" value="C:cytosolic large ribosomal subunit"/>
    <property type="evidence" value="ECO:0007669"/>
    <property type="project" value="TreeGrafter"/>
</dbReference>
<dbReference type="GO" id="GO:0003729">
    <property type="term" value="F:mRNA binding"/>
    <property type="evidence" value="ECO:0007669"/>
    <property type="project" value="TreeGrafter"/>
</dbReference>
<dbReference type="GO" id="GO:0003735">
    <property type="term" value="F:structural constituent of ribosome"/>
    <property type="evidence" value="ECO:0007669"/>
    <property type="project" value="InterPro"/>
</dbReference>
<dbReference type="GO" id="GO:0017148">
    <property type="term" value="P:negative regulation of translation"/>
    <property type="evidence" value="ECO:0007669"/>
    <property type="project" value="TreeGrafter"/>
</dbReference>
<dbReference type="GO" id="GO:0006412">
    <property type="term" value="P:translation"/>
    <property type="evidence" value="ECO:0007669"/>
    <property type="project" value="UniProtKB-UniRule"/>
</dbReference>
<dbReference type="CDD" id="cd00392">
    <property type="entry name" value="Ribosomal_L13"/>
    <property type="match status" value="1"/>
</dbReference>
<dbReference type="Gene3D" id="3.90.1180.10">
    <property type="entry name" value="Ribosomal protein L13"/>
    <property type="match status" value="1"/>
</dbReference>
<dbReference type="HAMAP" id="MF_01366">
    <property type="entry name" value="Ribosomal_uL13"/>
    <property type="match status" value="1"/>
</dbReference>
<dbReference type="InterPro" id="IPR005822">
    <property type="entry name" value="Ribosomal_uL13"/>
</dbReference>
<dbReference type="InterPro" id="IPR005823">
    <property type="entry name" value="Ribosomal_uL13_bac-type"/>
</dbReference>
<dbReference type="InterPro" id="IPR023563">
    <property type="entry name" value="Ribosomal_uL13_CS"/>
</dbReference>
<dbReference type="InterPro" id="IPR036899">
    <property type="entry name" value="Ribosomal_uL13_sf"/>
</dbReference>
<dbReference type="NCBIfam" id="TIGR01066">
    <property type="entry name" value="rplM_bact"/>
    <property type="match status" value="1"/>
</dbReference>
<dbReference type="PANTHER" id="PTHR11545:SF2">
    <property type="entry name" value="LARGE RIBOSOMAL SUBUNIT PROTEIN UL13M"/>
    <property type="match status" value="1"/>
</dbReference>
<dbReference type="PANTHER" id="PTHR11545">
    <property type="entry name" value="RIBOSOMAL PROTEIN L13"/>
    <property type="match status" value="1"/>
</dbReference>
<dbReference type="Pfam" id="PF00572">
    <property type="entry name" value="Ribosomal_L13"/>
    <property type="match status" value="1"/>
</dbReference>
<dbReference type="PIRSF" id="PIRSF002181">
    <property type="entry name" value="Ribosomal_L13"/>
    <property type="match status" value="1"/>
</dbReference>
<dbReference type="SUPFAM" id="SSF52161">
    <property type="entry name" value="Ribosomal protein L13"/>
    <property type="match status" value="1"/>
</dbReference>
<dbReference type="PROSITE" id="PS00783">
    <property type="entry name" value="RIBOSOMAL_L13"/>
    <property type="match status" value="1"/>
</dbReference>
<reference key="1">
    <citation type="journal article" date="2006" name="PLoS Genet.">
        <title>Who ate whom? Adaptive Helicobacter genomic changes that accompanied a host jump from early humans to large felines.</title>
        <authorList>
            <person name="Eppinger M."/>
            <person name="Baar C."/>
            <person name="Linz B."/>
            <person name="Raddatz G."/>
            <person name="Lanz C."/>
            <person name="Keller H."/>
            <person name="Morelli G."/>
            <person name="Gressmann H."/>
            <person name="Achtman M."/>
            <person name="Schuster S.C."/>
        </authorList>
    </citation>
    <scope>NUCLEOTIDE SEQUENCE [LARGE SCALE GENOMIC DNA]</scope>
    <source>
        <strain>Sheeba</strain>
    </source>
</reference>
<keyword id="KW-0687">Ribonucleoprotein</keyword>
<keyword id="KW-0689">Ribosomal protein</keyword>
<gene>
    <name evidence="1" type="primary">rplM</name>
    <name type="ordered locus">Hac_1521</name>
</gene>
<evidence type="ECO:0000255" key="1">
    <source>
        <dbReference type="HAMAP-Rule" id="MF_01366"/>
    </source>
</evidence>
<evidence type="ECO:0000305" key="2"/>
<name>RL13_HELAH</name>
<feature type="chain" id="PRO_1000055390" description="Large ribosomal subunit protein uL13">
    <location>
        <begin position="1"/>
        <end position="141"/>
    </location>
</feature>
<sequence>MTKTAKVSDIVRDWVVLDAKDKVFGRLITEIAVLLRGKHRPFYTPNVDCGDFVVVINANKVKFSGMKLEDKEYFTHSGYFGSTKSKTLQEMLEKTPEKLYHLAVRGMLPKTKLGKAMIKKLKVYRDDKHPHTAQTSKKDAK</sequence>
<protein>
    <recommendedName>
        <fullName evidence="1">Large ribosomal subunit protein uL13</fullName>
    </recommendedName>
    <alternativeName>
        <fullName evidence="2">50S ribosomal protein L13</fullName>
    </alternativeName>
</protein>
<comment type="function">
    <text evidence="1">This protein is one of the early assembly proteins of the 50S ribosomal subunit, although it is not seen to bind rRNA by itself. It is important during the early stages of 50S assembly.</text>
</comment>
<comment type="subunit">
    <text evidence="1">Part of the 50S ribosomal subunit.</text>
</comment>
<comment type="similarity">
    <text evidence="1">Belongs to the universal ribosomal protein uL13 family.</text>
</comment>
<proteinExistence type="inferred from homology"/>
<organism>
    <name type="scientific">Helicobacter acinonychis (strain Sheeba)</name>
    <dbReference type="NCBI Taxonomy" id="382638"/>
    <lineage>
        <taxon>Bacteria</taxon>
        <taxon>Pseudomonadati</taxon>
        <taxon>Campylobacterota</taxon>
        <taxon>Epsilonproteobacteria</taxon>
        <taxon>Campylobacterales</taxon>
        <taxon>Helicobacteraceae</taxon>
        <taxon>Helicobacter</taxon>
    </lineage>
</organism>